<accession>P0A517</accession>
<accession>A0A1R3Y0R3</accession>
<accession>Q50696</accession>
<accession>X2BKK6</accession>
<proteinExistence type="inferred from homology"/>
<reference key="1">
    <citation type="journal article" date="2003" name="Proc. Natl. Acad. Sci. U.S.A.">
        <title>The complete genome sequence of Mycobacterium bovis.</title>
        <authorList>
            <person name="Garnier T."/>
            <person name="Eiglmeier K."/>
            <person name="Camus J.-C."/>
            <person name="Medina N."/>
            <person name="Mansoor H."/>
            <person name="Pryor M."/>
            <person name="Duthoy S."/>
            <person name="Grondin S."/>
            <person name="Lacroix C."/>
            <person name="Monsempe C."/>
            <person name="Simon S."/>
            <person name="Harris B."/>
            <person name="Atkin R."/>
            <person name="Doggett J."/>
            <person name="Mayes R."/>
            <person name="Keating L."/>
            <person name="Wheeler P.R."/>
            <person name="Parkhill J."/>
            <person name="Barrell B.G."/>
            <person name="Cole S.T."/>
            <person name="Gordon S.V."/>
            <person name="Hewinson R.G."/>
        </authorList>
    </citation>
    <scope>NUCLEOTIDE SEQUENCE [LARGE SCALE GENOMIC DNA]</scope>
    <source>
        <strain>ATCC BAA-935 / AF2122/97</strain>
    </source>
</reference>
<reference key="2">
    <citation type="journal article" date="2017" name="Genome Announc.">
        <title>Updated reference genome sequence and annotation of Mycobacterium bovis AF2122/97.</title>
        <authorList>
            <person name="Malone K.M."/>
            <person name="Farrell D."/>
            <person name="Stuber T.P."/>
            <person name="Schubert O.T."/>
            <person name="Aebersold R."/>
            <person name="Robbe-Austerman S."/>
            <person name="Gordon S.V."/>
        </authorList>
    </citation>
    <scope>NUCLEOTIDE SEQUENCE [LARGE SCALE GENOMIC DNA]</scope>
    <scope>GENOME REANNOTATION</scope>
    <source>
        <strain>ATCC BAA-935 / AF2122/97</strain>
    </source>
</reference>
<dbReference type="EC" id="1.14.15.14" evidence="1"/>
<dbReference type="EC" id="1.14.15.28" evidence="1"/>
<dbReference type="EMBL" id="LT708304">
    <property type="protein sequence ID" value="SIU00900.1"/>
    <property type="molecule type" value="Genomic_DNA"/>
</dbReference>
<dbReference type="RefSeq" id="NP_855938.1">
    <property type="nucleotide sequence ID" value="NC_002945.3"/>
</dbReference>
<dbReference type="RefSeq" id="WP_003411654.1">
    <property type="nucleotide sequence ID" value="NC_002945.4"/>
</dbReference>
<dbReference type="SMR" id="P0A517"/>
<dbReference type="GeneID" id="45426248"/>
<dbReference type="KEGG" id="mbo:BQ2027_MB2289"/>
<dbReference type="PATRIC" id="fig|233413.5.peg.2514"/>
<dbReference type="UniPathway" id="UPA01022"/>
<dbReference type="Proteomes" id="UP000001419">
    <property type="component" value="Chromosome"/>
</dbReference>
<dbReference type="GO" id="GO:0036199">
    <property type="term" value="F:cholest-4-en-3-one 26-monooxygenase activity"/>
    <property type="evidence" value="ECO:0000250"/>
    <property type="project" value="UniProtKB"/>
</dbReference>
<dbReference type="GO" id="GO:0031073">
    <property type="term" value="F:cholesterol 26-hydroxylase activity"/>
    <property type="evidence" value="ECO:0000250"/>
    <property type="project" value="UniProtKB"/>
</dbReference>
<dbReference type="GO" id="GO:0020037">
    <property type="term" value="F:heme binding"/>
    <property type="evidence" value="ECO:0000250"/>
    <property type="project" value="UniProtKB"/>
</dbReference>
<dbReference type="GO" id="GO:0005506">
    <property type="term" value="F:iron ion binding"/>
    <property type="evidence" value="ECO:0007669"/>
    <property type="project" value="InterPro"/>
</dbReference>
<dbReference type="GO" id="GO:0070402">
    <property type="term" value="F:NADPH binding"/>
    <property type="evidence" value="ECO:0000250"/>
    <property type="project" value="UniProtKB"/>
</dbReference>
<dbReference type="GO" id="GO:0006707">
    <property type="term" value="P:cholesterol catabolic process"/>
    <property type="evidence" value="ECO:0007669"/>
    <property type="project" value="TreeGrafter"/>
</dbReference>
<dbReference type="GO" id="GO:0010430">
    <property type="term" value="P:fatty acid omega-oxidation"/>
    <property type="evidence" value="ECO:0000250"/>
    <property type="project" value="UniProtKB"/>
</dbReference>
<dbReference type="GO" id="GO:0097089">
    <property type="term" value="P:methyl-branched fatty acid metabolic process"/>
    <property type="evidence" value="ECO:0000250"/>
    <property type="project" value="UniProtKB"/>
</dbReference>
<dbReference type="CDD" id="cd11033">
    <property type="entry name" value="CYP142-like"/>
    <property type="match status" value="1"/>
</dbReference>
<dbReference type="FunFam" id="1.10.630.10:FF:000127">
    <property type="entry name" value="Cytochrome P450 Cyp124"/>
    <property type="match status" value="1"/>
</dbReference>
<dbReference type="Gene3D" id="1.10.630.10">
    <property type="entry name" value="Cytochrome P450"/>
    <property type="match status" value="1"/>
</dbReference>
<dbReference type="InterPro" id="IPR001128">
    <property type="entry name" value="Cyt_P450"/>
</dbReference>
<dbReference type="InterPro" id="IPR002397">
    <property type="entry name" value="Cyt_P450_B"/>
</dbReference>
<dbReference type="InterPro" id="IPR036396">
    <property type="entry name" value="Cyt_P450_sf"/>
</dbReference>
<dbReference type="PANTHER" id="PTHR46696:SF4">
    <property type="entry name" value="BIOTIN BIOSYNTHESIS CYTOCHROME P450"/>
    <property type="match status" value="1"/>
</dbReference>
<dbReference type="PANTHER" id="PTHR46696">
    <property type="entry name" value="P450, PUTATIVE (EUROFUNG)-RELATED"/>
    <property type="match status" value="1"/>
</dbReference>
<dbReference type="Pfam" id="PF00067">
    <property type="entry name" value="p450"/>
    <property type="match status" value="2"/>
</dbReference>
<dbReference type="PRINTS" id="PR00359">
    <property type="entry name" value="BP450"/>
</dbReference>
<dbReference type="SUPFAM" id="SSF48264">
    <property type="entry name" value="Cytochrome P450"/>
    <property type="match status" value="1"/>
</dbReference>
<comment type="function">
    <text evidence="1">Primarily hydroxylates the omega-carbon of a number of methyl-branched lipids, including (2E,6E)-farnesol, phytanate, geranylgeraniol, 15-methylpalmitate and (2E,6E)-farnesyl diphosphate. Also catalyzes the sequential oxidation of the terminal methyl of cholest-4-en-3-one into (25R)-26-hydroxycholest-4-en-3-one (alcohol), (25R)-26-oxocholest-4-en-3-one (aldehyde), to finally yield the carboxylic acid (25R)-3-oxocholest-4-en-26-oate. Also able to sequentially oxidize cholesterol itself, not only cholest-4-en-3-one.</text>
</comment>
<comment type="catalytic activity">
    <reaction evidence="1">
        <text>a methyl-branched lipid + O2 + 2 reduced ferredoxin [iron-sulfur] cluster + 2 H(+) = an omega-hydroxy-methyl-branched lipid + H2O + 2 oxidized ferredoxin [iron-sulfur] cluster.</text>
        <dbReference type="EC" id="1.14.15.14"/>
    </reaction>
</comment>
<comment type="catalytic activity">
    <reaction evidence="1">
        <text>cholest-4-en-3-one + 6 reduced [2Fe-2S]-[ferredoxin] + 3 O2 + 5 H(+) = (25R)-3-oxocholest-4-en-26-oate + 6 oxidized [2Fe-2S]-[ferredoxin] + 4 H2O</text>
        <dbReference type="Rhea" id="RHEA:49996"/>
        <dbReference type="Rhea" id="RHEA-COMP:10000"/>
        <dbReference type="Rhea" id="RHEA-COMP:10001"/>
        <dbReference type="ChEBI" id="CHEBI:15377"/>
        <dbReference type="ChEBI" id="CHEBI:15378"/>
        <dbReference type="ChEBI" id="CHEBI:15379"/>
        <dbReference type="ChEBI" id="CHEBI:16175"/>
        <dbReference type="ChEBI" id="CHEBI:33737"/>
        <dbReference type="ChEBI" id="CHEBI:33738"/>
        <dbReference type="ChEBI" id="CHEBI:71570"/>
        <dbReference type="EC" id="1.14.15.28"/>
    </reaction>
</comment>
<comment type="cofactor">
    <cofactor evidence="1">
        <name>heme</name>
        <dbReference type="ChEBI" id="CHEBI:30413"/>
    </cofactor>
</comment>
<comment type="pathway">
    <text evidence="1">Lipid metabolism; branched-chain fatty acid metabolism.</text>
</comment>
<comment type="similarity">
    <text evidence="2">Belongs to the cytochrome P450 family.</text>
</comment>
<gene>
    <name type="primary">cyp124</name>
    <name type="ordered locus">BQ2027_MB2289</name>
</gene>
<organism>
    <name type="scientific">Mycobacterium bovis (strain ATCC BAA-935 / AF2122/97)</name>
    <dbReference type="NCBI Taxonomy" id="233413"/>
    <lineage>
        <taxon>Bacteria</taxon>
        <taxon>Bacillati</taxon>
        <taxon>Actinomycetota</taxon>
        <taxon>Actinomycetes</taxon>
        <taxon>Mycobacteriales</taxon>
        <taxon>Mycobacteriaceae</taxon>
        <taxon>Mycobacterium</taxon>
        <taxon>Mycobacterium tuberculosis complex</taxon>
    </lineage>
</organism>
<keyword id="KW-0276">Fatty acid metabolism</keyword>
<keyword id="KW-0349">Heme</keyword>
<keyword id="KW-0408">Iron</keyword>
<keyword id="KW-0443">Lipid metabolism</keyword>
<keyword id="KW-0479">Metal-binding</keyword>
<keyword id="KW-0503">Monooxygenase</keyword>
<keyword id="KW-0521">NADP</keyword>
<keyword id="KW-0560">Oxidoreductase</keyword>
<keyword id="KW-1185">Reference proteome</keyword>
<evidence type="ECO:0000250" key="1">
    <source>
        <dbReference type="UniProtKB" id="P9WPP3"/>
    </source>
</evidence>
<evidence type="ECO:0000305" key="2"/>
<feature type="chain" id="PRO_0000052277" description="Methyl-branched lipid omega-hydroxylase">
    <location>
        <begin position="1"/>
        <end position="428"/>
    </location>
</feature>
<feature type="binding site" description="axial binding residue" evidence="1">
    <location>
        <position position="379"/>
    </location>
    <ligand>
        <name>heme</name>
        <dbReference type="ChEBI" id="CHEBI:30413"/>
    </ligand>
    <ligandPart>
        <name>Fe</name>
        <dbReference type="ChEBI" id="CHEBI:18248"/>
    </ligandPart>
</feature>
<sequence length="428" mass="47825">MGLNTAIATRVNGTPPPEVPIADIELGSLDFWALDDDVRDGAFATLRREAPISFWPTIELPGFVAGNGHWALTKYDDVFYASRHPDIFSSYPNITINDQTPELAEYFGSMIVLDDPRHQRLRSIVSRAFTPKVVARIEAAVRDRAHRLVSSMIANNPDRQADLVSELAGPLPLQIICDMMGIPKADHQRIFHWTNVILGFGDPDLATDFDEFMQVSADIGAYATALAEDRRVNHHDDLTSSLVEAEVDGERLSSREIASFFILLVVAGNETTRNAITHGVLALSRYPEQRDRWWSDFDGLAPTAVEEIVRWASPVVYMRRTLTQDIELRGTKMAAGDKVSLWYCSANRDESKFADPWTFDLARNPNPHLGFGGGGAHFCLGANLARREIRVAFDELRRQMPDVVATEEPARLLSQFIHGIKTLPVTWS</sequence>
<name>CP124_MYCBO</name>
<protein>
    <recommendedName>
        <fullName evidence="1">Methyl-branched lipid omega-hydroxylase</fullName>
        <ecNumber evidence="1">1.14.15.14</ecNumber>
    </recommendedName>
    <alternativeName>
        <fullName evidence="1">Cholest-4-en-3-one C26-monooxygenase</fullName>
    </alternativeName>
    <alternativeName>
        <fullName evidence="1">Cholest-4-en-3-one C26-monooxygenase [(25R)-3-oxocholest-4-en-26-oate forming]</fullName>
    </alternativeName>
    <alternativeName>
        <fullName evidence="1">Cholesterol C26-monooxygenase</fullName>
    </alternativeName>
    <alternativeName>
        <fullName evidence="1">Cholesterol C26-monooxygenase [(25R)-3beta-hydroxycholest-5-en-26-oate forming]</fullName>
    </alternativeName>
    <alternativeName>
        <fullName evidence="1">Cytochrome P450 124</fullName>
    </alternativeName>
    <alternativeName>
        <fullName evidence="1">Steroid C26-monooxygenase</fullName>
        <ecNumber evidence="1">1.14.15.28</ecNumber>
    </alternativeName>
    <alternativeName>
        <fullName evidence="1">Steroid C27-monooxygenase</fullName>
    </alternativeName>
</protein>